<protein>
    <recommendedName>
        <fullName evidence="1">D-aminoacyl-tRNA deacylase</fullName>
        <shortName evidence="1">DTD</shortName>
        <ecNumber evidence="1">3.1.1.96</ecNumber>
    </recommendedName>
    <alternativeName>
        <fullName evidence="1">Gly-tRNA(Ala) deacylase</fullName>
    </alternativeName>
</protein>
<feature type="chain" id="PRO_0000164540" description="D-aminoacyl-tRNA deacylase">
    <location>
        <begin position="1"/>
        <end position="148"/>
    </location>
</feature>
<feature type="short sequence motif" description="Gly-cisPro motif, important for rejection of L-amino acids" evidence="1">
    <location>
        <begin position="137"/>
        <end position="138"/>
    </location>
</feature>
<reference key="1">
    <citation type="journal article" date="2003" name="Science">
        <title>Role of mobile DNA in the evolution of vancomycin-resistant Enterococcus faecalis.</title>
        <authorList>
            <person name="Paulsen I.T."/>
            <person name="Banerjei L."/>
            <person name="Myers G.S.A."/>
            <person name="Nelson K.E."/>
            <person name="Seshadri R."/>
            <person name="Read T.D."/>
            <person name="Fouts D.E."/>
            <person name="Eisen J.A."/>
            <person name="Gill S.R."/>
            <person name="Heidelberg J.F."/>
            <person name="Tettelin H."/>
            <person name="Dodson R.J."/>
            <person name="Umayam L.A."/>
            <person name="Brinkac L.M."/>
            <person name="Beanan M.J."/>
            <person name="Daugherty S.C."/>
            <person name="DeBoy R.T."/>
            <person name="Durkin S.A."/>
            <person name="Kolonay J.F."/>
            <person name="Madupu R."/>
            <person name="Nelson W.C."/>
            <person name="Vamathevan J.J."/>
            <person name="Tran B."/>
            <person name="Upton J."/>
            <person name="Hansen T."/>
            <person name="Shetty J."/>
            <person name="Khouri H.M."/>
            <person name="Utterback T.R."/>
            <person name="Radune D."/>
            <person name="Ketchum K.A."/>
            <person name="Dougherty B.A."/>
            <person name="Fraser C.M."/>
        </authorList>
    </citation>
    <scope>NUCLEOTIDE SEQUENCE [LARGE SCALE GENOMIC DNA]</scope>
    <source>
        <strain>ATCC 700802 / V583</strain>
    </source>
</reference>
<sequence length="148" mass="16354">MKVVIQRVSQAQVAIEEQIVGQIKQGFMVLVGIHQEDTPEDVAYVVGKISKLRVFEDDEGKMNRSIQEIEGSILSISQFTLYAKTKKGNRPSFIEAARPDVAIPLYELFNQQLEAEGIAVATGEFGADMQVSLTNDGPVTIVIDTREK</sequence>
<gene>
    <name evidence="1" type="primary">dtd</name>
    <name type="ordered locus">EF_1973</name>
</gene>
<proteinExistence type="inferred from homology"/>
<keyword id="KW-0963">Cytoplasm</keyword>
<keyword id="KW-0378">Hydrolase</keyword>
<keyword id="KW-1185">Reference proteome</keyword>
<keyword id="KW-0694">RNA-binding</keyword>
<keyword id="KW-0820">tRNA-binding</keyword>
<evidence type="ECO:0000255" key="1">
    <source>
        <dbReference type="HAMAP-Rule" id="MF_00518"/>
    </source>
</evidence>
<comment type="function">
    <text evidence="1">An aminoacyl-tRNA editing enzyme that deacylates mischarged D-aminoacyl-tRNAs. Also deacylates mischarged glycyl-tRNA(Ala), protecting cells against glycine mischarging by AlaRS. Acts via tRNA-based rather than protein-based catalysis; rejects L-amino acids rather than detecting D-amino acids in the active site. By recycling D-aminoacyl-tRNA to D-amino acids and free tRNA molecules, this enzyme counteracts the toxicity associated with the formation of D-aminoacyl-tRNA entities in vivo and helps enforce protein L-homochirality.</text>
</comment>
<comment type="catalytic activity">
    <reaction evidence="1">
        <text>glycyl-tRNA(Ala) + H2O = tRNA(Ala) + glycine + H(+)</text>
        <dbReference type="Rhea" id="RHEA:53744"/>
        <dbReference type="Rhea" id="RHEA-COMP:9657"/>
        <dbReference type="Rhea" id="RHEA-COMP:13640"/>
        <dbReference type="ChEBI" id="CHEBI:15377"/>
        <dbReference type="ChEBI" id="CHEBI:15378"/>
        <dbReference type="ChEBI" id="CHEBI:57305"/>
        <dbReference type="ChEBI" id="CHEBI:78442"/>
        <dbReference type="ChEBI" id="CHEBI:78522"/>
        <dbReference type="EC" id="3.1.1.96"/>
    </reaction>
</comment>
<comment type="catalytic activity">
    <reaction evidence="1">
        <text>a D-aminoacyl-tRNA + H2O = a tRNA + a D-alpha-amino acid + H(+)</text>
        <dbReference type="Rhea" id="RHEA:13953"/>
        <dbReference type="Rhea" id="RHEA-COMP:10123"/>
        <dbReference type="Rhea" id="RHEA-COMP:10124"/>
        <dbReference type="ChEBI" id="CHEBI:15377"/>
        <dbReference type="ChEBI" id="CHEBI:15378"/>
        <dbReference type="ChEBI" id="CHEBI:59871"/>
        <dbReference type="ChEBI" id="CHEBI:78442"/>
        <dbReference type="ChEBI" id="CHEBI:79333"/>
        <dbReference type="EC" id="3.1.1.96"/>
    </reaction>
</comment>
<comment type="subunit">
    <text evidence="1">Homodimer.</text>
</comment>
<comment type="subcellular location">
    <subcellularLocation>
        <location evidence="1">Cytoplasm</location>
    </subcellularLocation>
</comment>
<comment type="domain">
    <text evidence="1">A Gly-cisPro motif from one monomer fits into the active site of the other monomer to allow specific chiral rejection of L-amino acids.</text>
</comment>
<comment type="similarity">
    <text evidence="1">Belongs to the DTD family.</text>
</comment>
<organism>
    <name type="scientific">Enterococcus faecalis (strain ATCC 700802 / V583)</name>
    <dbReference type="NCBI Taxonomy" id="226185"/>
    <lineage>
        <taxon>Bacteria</taxon>
        <taxon>Bacillati</taxon>
        <taxon>Bacillota</taxon>
        <taxon>Bacilli</taxon>
        <taxon>Lactobacillales</taxon>
        <taxon>Enterococcaceae</taxon>
        <taxon>Enterococcus</taxon>
    </lineage>
</organism>
<name>DTD_ENTFA</name>
<accession>Q833H9</accession>
<dbReference type="EC" id="3.1.1.96" evidence="1"/>
<dbReference type="EMBL" id="AE016830">
    <property type="protein sequence ID" value="AAO81719.1"/>
    <property type="molecule type" value="Genomic_DNA"/>
</dbReference>
<dbReference type="RefSeq" id="NP_815649.1">
    <property type="nucleotide sequence ID" value="NC_004668.1"/>
</dbReference>
<dbReference type="RefSeq" id="WP_002357080.1">
    <property type="nucleotide sequence ID" value="NZ_KE136528.1"/>
</dbReference>
<dbReference type="SMR" id="Q833H9"/>
<dbReference type="STRING" id="226185.EF_1973"/>
<dbReference type="EnsemblBacteria" id="AAO81719">
    <property type="protein sequence ID" value="AAO81719"/>
    <property type="gene ID" value="EF_1973"/>
</dbReference>
<dbReference type="GeneID" id="60894207"/>
<dbReference type="KEGG" id="efa:EF1973"/>
<dbReference type="PATRIC" id="fig|226185.45.peg.1553"/>
<dbReference type="eggNOG" id="COG1490">
    <property type="taxonomic scope" value="Bacteria"/>
</dbReference>
<dbReference type="HOGENOM" id="CLU_076901_1_0_9"/>
<dbReference type="Proteomes" id="UP000001415">
    <property type="component" value="Chromosome"/>
</dbReference>
<dbReference type="GO" id="GO:0005737">
    <property type="term" value="C:cytoplasm"/>
    <property type="evidence" value="ECO:0007669"/>
    <property type="project" value="UniProtKB-SubCell"/>
</dbReference>
<dbReference type="GO" id="GO:0051500">
    <property type="term" value="F:D-tyrosyl-tRNA(Tyr) deacylase activity"/>
    <property type="evidence" value="ECO:0007669"/>
    <property type="project" value="TreeGrafter"/>
</dbReference>
<dbReference type="GO" id="GO:0106026">
    <property type="term" value="F:Gly-tRNA(Ala) deacylase activity"/>
    <property type="evidence" value="ECO:0007669"/>
    <property type="project" value="UniProtKB-UniRule"/>
</dbReference>
<dbReference type="GO" id="GO:0043908">
    <property type="term" value="F:Ser(Gly)-tRNA(Ala) hydrolase activity"/>
    <property type="evidence" value="ECO:0007669"/>
    <property type="project" value="UniProtKB-UniRule"/>
</dbReference>
<dbReference type="GO" id="GO:0000049">
    <property type="term" value="F:tRNA binding"/>
    <property type="evidence" value="ECO:0007669"/>
    <property type="project" value="UniProtKB-UniRule"/>
</dbReference>
<dbReference type="GO" id="GO:0019478">
    <property type="term" value="P:D-amino acid catabolic process"/>
    <property type="evidence" value="ECO:0007669"/>
    <property type="project" value="UniProtKB-UniRule"/>
</dbReference>
<dbReference type="CDD" id="cd00563">
    <property type="entry name" value="Dtyr_deacylase"/>
    <property type="match status" value="1"/>
</dbReference>
<dbReference type="FunFam" id="3.50.80.10:FF:000001">
    <property type="entry name" value="D-aminoacyl-tRNA deacylase"/>
    <property type="match status" value="1"/>
</dbReference>
<dbReference type="Gene3D" id="3.50.80.10">
    <property type="entry name" value="D-tyrosyl-tRNA(Tyr) deacylase"/>
    <property type="match status" value="1"/>
</dbReference>
<dbReference type="HAMAP" id="MF_00518">
    <property type="entry name" value="Deacylase_Dtd"/>
    <property type="match status" value="1"/>
</dbReference>
<dbReference type="InterPro" id="IPR003732">
    <property type="entry name" value="Daa-tRNA_deacyls_DTD"/>
</dbReference>
<dbReference type="InterPro" id="IPR023509">
    <property type="entry name" value="DTD-like_sf"/>
</dbReference>
<dbReference type="NCBIfam" id="TIGR00256">
    <property type="entry name" value="D-aminoacyl-tRNA deacylase"/>
    <property type="match status" value="1"/>
</dbReference>
<dbReference type="PANTHER" id="PTHR10472:SF5">
    <property type="entry name" value="D-AMINOACYL-TRNA DEACYLASE 1"/>
    <property type="match status" value="1"/>
</dbReference>
<dbReference type="PANTHER" id="PTHR10472">
    <property type="entry name" value="D-TYROSYL-TRNA TYR DEACYLASE"/>
    <property type="match status" value="1"/>
</dbReference>
<dbReference type="Pfam" id="PF02580">
    <property type="entry name" value="Tyr_Deacylase"/>
    <property type="match status" value="1"/>
</dbReference>
<dbReference type="SUPFAM" id="SSF69500">
    <property type="entry name" value="DTD-like"/>
    <property type="match status" value="1"/>
</dbReference>